<protein>
    <recommendedName>
        <fullName>Probable protein phosphatase 2C 17</fullName>
        <shortName>AtPP2C17</shortName>
        <ecNumber>3.1.3.16</ecNumber>
    </recommendedName>
</protein>
<comment type="catalytic activity">
    <reaction>
        <text>O-phospho-L-seryl-[protein] + H2O = L-seryl-[protein] + phosphate</text>
        <dbReference type="Rhea" id="RHEA:20629"/>
        <dbReference type="Rhea" id="RHEA-COMP:9863"/>
        <dbReference type="Rhea" id="RHEA-COMP:11604"/>
        <dbReference type="ChEBI" id="CHEBI:15377"/>
        <dbReference type="ChEBI" id="CHEBI:29999"/>
        <dbReference type="ChEBI" id="CHEBI:43474"/>
        <dbReference type="ChEBI" id="CHEBI:83421"/>
        <dbReference type="EC" id="3.1.3.16"/>
    </reaction>
</comment>
<comment type="catalytic activity">
    <reaction>
        <text>O-phospho-L-threonyl-[protein] + H2O = L-threonyl-[protein] + phosphate</text>
        <dbReference type="Rhea" id="RHEA:47004"/>
        <dbReference type="Rhea" id="RHEA-COMP:11060"/>
        <dbReference type="Rhea" id="RHEA-COMP:11605"/>
        <dbReference type="ChEBI" id="CHEBI:15377"/>
        <dbReference type="ChEBI" id="CHEBI:30013"/>
        <dbReference type="ChEBI" id="CHEBI:43474"/>
        <dbReference type="ChEBI" id="CHEBI:61977"/>
        <dbReference type="EC" id="3.1.3.16"/>
    </reaction>
</comment>
<comment type="cofactor">
    <cofactor evidence="1">
        <name>Mg(2+)</name>
        <dbReference type="ChEBI" id="CHEBI:18420"/>
    </cofactor>
    <cofactor evidence="1">
        <name>Mn(2+)</name>
        <dbReference type="ChEBI" id="CHEBI:29035"/>
    </cofactor>
    <text evidence="1">Binds 2 magnesium or manganese ions per subunit.</text>
</comment>
<comment type="similarity">
    <text evidence="3">Belongs to the PP2C family.</text>
</comment>
<comment type="sequence caution" evidence="3">
    <conflict type="erroneous gene model prediction">
        <sequence resource="EMBL-CDS" id="AAG52101"/>
    </conflict>
</comment>
<gene>
    <name type="ordered locus">At1g78200</name>
    <name type="ORF">T11I11.14</name>
</gene>
<dbReference type="EC" id="3.1.3.16"/>
<dbReference type="EMBL" id="AC012680">
    <property type="protein sequence ID" value="AAG52101.1"/>
    <property type="status" value="ALT_SEQ"/>
    <property type="molecule type" value="Genomic_DNA"/>
</dbReference>
<dbReference type="EMBL" id="CP002684">
    <property type="protein sequence ID" value="AEE36080.1"/>
    <property type="molecule type" value="Genomic_DNA"/>
</dbReference>
<dbReference type="EMBL" id="CP002684">
    <property type="protein sequence ID" value="AEE36081.1"/>
    <property type="molecule type" value="Genomic_DNA"/>
</dbReference>
<dbReference type="EMBL" id="CP002684">
    <property type="protein sequence ID" value="ANM60992.1"/>
    <property type="molecule type" value="Genomic_DNA"/>
</dbReference>
<dbReference type="EMBL" id="AY048244">
    <property type="protein sequence ID" value="AAK82506.1"/>
    <property type="molecule type" value="mRNA"/>
</dbReference>
<dbReference type="EMBL" id="AY133563">
    <property type="protein sequence ID" value="AAM91393.1"/>
    <property type="molecule type" value="mRNA"/>
</dbReference>
<dbReference type="EMBL" id="AK317294">
    <property type="protein sequence ID" value="BAH19970.1"/>
    <property type="molecule type" value="mRNA"/>
</dbReference>
<dbReference type="PIR" id="D96811">
    <property type="entry name" value="D96811"/>
</dbReference>
<dbReference type="RefSeq" id="NP_001323236.1">
    <property type="nucleotide sequence ID" value="NM_001334823.1"/>
</dbReference>
<dbReference type="RefSeq" id="NP_001323237.1">
    <property type="nucleotide sequence ID" value="NM_001334822.1"/>
</dbReference>
<dbReference type="RefSeq" id="NP_001323238.1">
    <property type="nucleotide sequence ID" value="NM_001334821.1"/>
</dbReference>
<dbReference type="RefSeq" id="NP_565172.1">
    <property type="nucleotide sequence ID" value="NM_106470.3"/>
</dbReference>
<dbReference type="RefSeq" id="NP_974168.1">
    <property type="nucleotide sequence ID" value="NM_202439.3"/>
</dbReference>
<dbReference type="SMR" id="Q8L7I4"/>
<dbReference type="FunCoup" id="Q8L7I4">
    <property type="interactions" value="947"/>
</dbReference>
<dbReference type="iPTMnet" id="Q8L7I4"/>
<dbReference type="PaxDb" id="3702-AT1G78200.2"/>
<dbReference type="ProteomicsDB" id="248873"/>
<dbReference type="EnsemblPlants" id="AT1G78200.1">
    <property type="protein sequence ID" value="AT1G78200.1"/>
    <property type="gene ID" value="AT1G78200"/>
</dbReference>
<dbReference type="EnsemblPlants" id="AT1G78200.2">
    <property type="protein sequence ID" value="AT1G78200.2"/>
    <property type="gene ID" value="AT1G78200"/>
</dbReference>
<dbReference type="EnsemblPlants" id="AT1G78200.3">
    <property type="protein sequence ID" value="AT1G78200.3"/>
    <property type="gene ID" value="AT1G78200"/>
</dbReference>
<dbReference type="GeneID" id="844156"/>
<dbReference type="Gramene" id="AT1G78200.1">
    <property type="protein sequence ID" value="AT1G78200.1"/>
    <property type="gene ID" value="AT1G78200"/>
</dbReference>
<dbReference type="Gramene" id="AT1G78200.2">
    <property type="protein sequence ID" value="AT1G78200.2"/>
    <property type="gene ID" value="AT1G78200"/>
</dbReference>
<dbReference type="Gramene" id="AT1G78200.3">
    <property type="protein sequence ID" value="AT1G78200.3"/>
    <property type="gene ID" value="AT1G78200"/>
</dbReference>
<dbReference type="KEGG" id="ath:AT1G78200"/>
<dbReference type="Araport" id="AT1G78200"/>
<dbReference type="TAIR" id="AT1G78200"/>
<dbReference type="eggNOG" id="KOG0698">
    <property type="taxonomic scope" value="Eukaryota"/>
</dbReference>
<dbReference type="HOGENOM" id="CLU_013173_0_1_1"/>
<dbReference type="InParanoid" id="Q8L7I4"/>
<dbReference type="OMA" id="MPKICCS"/>
<dbReference type="OrthoDB" id="10264738at2759"/>
<dbReference type="PhylomeDB" id="Q8L7I4"/>
<dbReference type="PRO" id="PR:Q8L7I4"/>
<dbReference type="Proteomes" id="UP000006548">
    <property type="component" value="Chromosome 1"/>
</dbReference>
<dbReference type="ExpressionAtlas" id="Q8L7I4">
    <property type="expression patterns" value="baseline and differential"/>
</dbReference>
<dbReference type="GO" id="GO:0005886">
    <property type="term" value="C:plasma membrane"/>
    <property type="evidence" value="ECO:0007005"/>
    <property type="project" value="TAIR"/>
</dbReference>
<dbReference type="GO" id="GO:0046872">
    <property type="term" value="F:metal ion binding"/>
    <property type="evidence" value="ECO:0007669"/>
    <property type="project" value="UniProtKB-KW"/>
</dbReference>
<dbReference type="GO" id="GO:0004722">
    <property type="term" value="F:protein serine/threonine phosphatase activity"/>
    <property type="evidence" value="ECO:0007669"/>
    <property type="project" value="UniProtKB-EC"/>
</dbReference>
<dbReference type="CDD" id="cd00143">
    <property type="entry name" value="PP2Cc"/>
    <property type="match status" value="1"/>
</dbReference>
<dbReference type="FunFam" id="3.60.40.10:FF:000010">
    <property type="entry name" value="Probable protein phosphatase 2C 39"/>
    <property type="match status" value="1"/>
</dbReference>
<dbReference type="Gene3D" id="3.60.40.10">
    <property type="entry name" value="PPM-type phosphatase domain"/>
    <property type="match status" value="1"/>
</dbReference>
<dbReference type="InterPro" id="IPR015655">
    <property type="entry name" value="PP2C"/>
</dbReference>
<dbReference type="InterPro" id="IPR036457">
    <property type="entry name" value="PPM-type-like_dom_sf"/>
</dbReference>
<dbReference type="InterPro" id="IPR001932">
    <property type="entry name" value="PPM-type_phosphatase-like_dom"/>
</dbReference>
<dbReference type="PANTHER" id="PTHR47992">
    <property type="entry name" value="PROTEIN PHOSPHATASE"/>
    <property type="match status" value="1"/>
</dbReference>
<dbReference type="Pfam" id="PF00481">
    <property type="entry name" value="PP2C"/>
    <property type="match status" value="1"/>
</dbReference>
<dbReference type="SMART" id="SM00331">
    <property type="entry name" value="PP2C_SIG"/>
    <property type="match status" value="1"/>
</dbReference>
<dbReference type="SMART" id="SM00332">
    <property type="entry name" value="PP2Cc"/>
    <property type="match status" value="1"/>
</dbReference>
<dbReference type="SUPFAM" id="SSF81606">
    <property type="entry name" value="PP2C-like"/>
    <property type="match status" value="1"/>
</dbReference>
<dbReference type="PROSITE" id="PS51746">
    <property type="entry name" value="PPM_2"/>
    <property type="match status" value="1"/>
</dbReference>
<organism>
    <name type="scientific">Arabidopsis thaliana</name>
    <name type="common">Mouse-ear cress</name>
    <dbReference type="NCBI Taxonomy" id="3702"/>
    <lineage>
        <taxon>Eukaryota</taxon>
        <taxon>Viridiplantae</taxon>
        <taxon>Streptophyta</taxon>
        <taxon>Embryophyta</taxon>
        <taxon>Tracheophyta</taxon>
        <taxon>Spermatophyta</taxon>
        <taxon>Magnoliopsida</taxon>
        <taxon>eudicotyledons</taxon>
        <taxon>Gunneridae</taxon>
        <taxon>Pentapetalae</taxon>
        <taxon>rosids</taxon>
        <taxon>malvids</taxon>
        <taxon>Brassicales</taxon>
        <taxon>Brassicaceae</taxon>
        <taxon>Camelineae</taxon>
        <taxon>Arabidopsis</taxon>
    </lineage>
</organism>
<feature type="chain" id="PRO_0000367947" description="Probable protein phosphatase 2C 17">
    <location>
        <begin position="1"/>
        <end position="283"/>
    </location>
</feature>
<feature type="domain" description="PPM-type phosphatase" evidence="2">
    <location>
        <begin position="32"/>
        <end position="282"/>
    </location>
</feature>
<feature type="binding site" evidence="1">
    <location>
        <position position="69"/>
    </location>
    <ligand>
        <name>Mn(2+)</name>
        <dbReference type="ChEBI" id="CHEBI:29035"/>
        <label>1</label>
    </ligand>
</feature>
<feature type="binding site" evidence="1">
    <location>
        <position position="69"/>
    </location>
    <ligand>
        <name>Mn(2+)</name>
        <dbReference type="ChEBI" id="CHEBI:29035"/>
        <label>2</label>
    </ligand>
</feature>
<feature type="binding site" evidence="1">
    <location>
        <position position="70"/>
    </location>
    <ligand>
        <name>Mn(2+)</name>
        <dbReference type="ChEBI" id="CHEBI:29035"/>
        <label>1</label>
    </ligand>
</feature>
<feature type="binding site" evidence="1">
    <location>
        <position position="234"/>
    </location>
    <ligand>
        <name>Mn(2+)</name>
        <dbReference type="ChEBI" id="CHEBI:29035"/>
        <label>2</label>
    </ligand>
</feature>
<feature type="binding site" evidence="1">
    <location>
        <position position="273"/>
    </location>
    <ligand>
        <name>Mn(2+)</name>
        <dbReference type="ChEBI" id="CHEBI:29035"/>
        <label>2</label>
    </ligand>
</feature>
<feature type="sequence conflict" description="In Ref. 3; AAK82506." evidence="3" ref="3">
    <original>VSR</original>
    <variation>ISS</variation>
    <location>
        <begin position="198"/>
        <end position="200"/>
    </location>
</feature>
<feature type="sequence conflict" description="In Ref. 3; AAK82506." evidence="3" ref="3">
    <original>LIL</original>
    <variation>IIM</variation>
    <location>
        <begin position="229"/>
        <end position="231"/>
    </location>
</feature>
<sequence>MPKICCSRSATQVVVAQKSNSGKGRNGEGGIKYGFSLIKGKSNHSMEDYHVAKFTNFNGNELGLFAIFDGHKGDHVAAYLQKHLFSNILKDGEFLVDPRRAIAKAYENTDQKILADNRTDLESGGSTAVTAILINGKALWIANVGDSRAIVSSRGKAKQMSVDHDPDDDTERSMIESKGGFVTNRPGDVPRVNGLLAVSRVFGDKNLKAYLNSEPEIKDVTIDSHTDFLILASDGISKVMSNQEAVDVAKKLKDPKEAARQVVAEALKRNSKDDISCIVVRFR</sequence>
<keyword id="KW-0378">Hydrolase</keyword>
<keyword id="KW-0460">Magnesium</keyword>
<keyword id="KW-0464">Manganese</keyword>
<keyword id="KW-0479">Metal-binding</keyword>
<keyword id="KW-0904">Protein phosphatase</keyword>
<keyword id="KW-1185">Reference proteome</keyword>
<reference key="1">
    <citation type="journal article" date="2000" name="Nature">
        <title>Sequence and analysis of chromosome 1 of the plant Arabidopsis thaliana.</title>
        <authorList>
            <person name="Theologis A."/>
            <person name="Ecker J.R."/>
            <person name="Palm C.J."/>
            <person name="Federspiel N.A."/>
            <person name="Kaul S."/>
            <person name="White O."/>
            <person name="Alonso J."/>
            <person name="Altafi H."/>
            <person name="Araujo R."/>
            <person name="Bowman C.L."/>
            <person name="Brooks S.Y."/>
            <person name="Buehler E."/>
            <person name="Chan A."/>
            <person name="Chao Q."/>
            <person name="Chen H."/>
            <person name="Cheuk R.F."/>
            <person name="Chin C.W."/>
            <person name="Chung M.K."/>
            <person name="Conn L."/>
            <person name="Conway A.B."/>
            <person name="Conway A.R."/>
            <person name="Creasy T.H."/>
            <person name="Dewar K."/>
            <person name="Dunn P."/>
            <person name="Etgu P."/>
            <person name="Feldblyum T.V."/>
            <person name="Feng J.-D."/>
            <person name="Fong B."/>
            <person name="Fujii C.Y."/>
            <person name="Gill J.E."/>
            <person name="Goldsmith A.D."/>
            <person name="Haas B."/>
            <person name="Hansen N.F."/>
            <person name="Hughes B."/>
            <person name="Huizar L."/>
            <person name="Hunter J.L."/>
            <person name="Jenkins J."/>
            <person name="Johnson-Hopson C."/>
            <person name="Khan S."/>
            <person name="Khaykin E."/>
            <person name="Kim C.J."/>
            <person name="Koo H.L."/>
            <person name="Kremenetskaia I."/>
            <person name="Kurtz D.B."/>
            <person name="Kwan A."/>
            <person name="Lam B."/>
            <person name="Langin-Hooper S."/>
            <person name="Lee A."/>
            <person name="Lee J.M."/>
            <person name="Lenz C.A."/>
            <person name="Li J.H."/>
            <person name="Li Y.-P."/>
            <person name="Lin X."/>
            <person name="Liu S.X."/>
            <person name="Liu Z.A."/>
            <person name="Luros J.S."/>
            <person name="Maiti R."/>
            <person name="Marziali A."/>
            <person name="Militscher J."/>
            <person name="Miranda M."/>
            <person name="Nguyen M."/>
            <person name="Nierman W.C."/>
            <person name="Osborne B.I."/>
            <person name="Pai G."/>
            <person name="Peterson J."/>
            <person name="Pham P.K."/>
            <person name="Rizzo M."/>
            <person name="Rooney T."/>
            <person name="Rowley D."/>
            <person name="Sakano H."/>
            <person name="Salzberg S.L."/>
            <person name="Schwartz J.R."/>
            <person name="Shinn P."/>
            <person name="Southwick A.M."/>
            <person name="Sun H."/>
            <person name="Tallon L.J."/>
            <person name="Tambunga G."/>
            <person name="Toriumi M.J."/>
            <person name="Town C.D."/>
            <person name="Utterback T."/>
            <person name="Van Aken S."/>
            <person name="Vaysberg M."/>
            <person name="Vysotskaia V.S."/>
            <person name="Walker M."/>
            <person name="Wu D."/>
            <person name="Yu G."/>
            <person name="Fraser C.M."/>
            <person name="Venter J.C."/>
            <person name="Davis R.W."/>
        </authorList>
    </citation>
    <scope>NUCLEOTIDE SEQUENCE [LARGE SCALE GENOMIC DNA]</scope>
    <source>
        <strain>cv. Columbia</strain>
    </source>
</reference>
<reference key="2">
    <citation type="journal article" date="2017" name="Plant J.">
        <title>Araport11: a complete reannotation of the Arabidopsis thaliana reference genome.</title>
        <authorList>
            <person name="Cheng C.Y."/>
            <person name="Krishnakumar V."/>
            <person name="Chan A.P."/>
            <person name="Thibaud-Nissen F."/>
            <person name="Schobel S."/>
            <person name="Town C.D."/>
        </authorList>
    </citation>
    <scope>GENOME REANNOTATION</scope>
    <source>
        <strain>cv. Columbia</strain>
    </source>
</reference>
<reference key="3">
    <citation type="journal article" date="2003" name="Science">
        <title>Empirical analysis of transcriptional activity in the Arabidopsis genome.</title>
        <authorList>
            <person name="Yamada K."/>
            <person name="Lim J."/>
            <person name="Dale J.M."/>
            <person name="Chen H."/>
            <person name="Shinn P."/>
            <person name="Palm C.J."/>
            <person name="Southwick A.M."/>
            <person name="Wu H.C."/>
            <person name="Kim C.J."/>
            <person name="Nguyen M."/>
            <person name="Pham P.K."/>
            <person name="Cheuk R.F."/>
            <person name="Karlin-Newmann G."/>
            <person name="Liu S.X."/>
            <person name="Lam B."/>
            <person name="Sakano H."/>
            <person name="Wu T."/>
            <person name="Yu G."/>
            <person name="Miranda M."/>
            <person name="Quach H.L."/>
            <person name="Tripp M."/>
            <person name="Chang C.H."/>
            <person name="Lee J.M."/>
            <person name="Toriumi M.J."/>
            <person name="Chan M.M."/>
            <person name="Tang C.C."/>
            <person name="Onodera C.S."/>
            <person name="Deng J.M."/>
            <person name="Akiyama K."/>
            <person name="Ansari Y."/>
            <person name="Arakawa T."/>
            <person name="Banh J."/>
            <person name="Banno F."/>
            <person name="Bowser L."/>
            <person name="Brooks S.Y."/>
            <person name="Carninci P."/>
            <person name="Chao Q."/>
            <person name="Choy N."/>
            <person name="Enju A."/>
            <person name="Goldsmith A.D."/>
            <person name="Gurjal M."/>
            <person name="Hansen N.F."/>
            <person name="Hayashizaki Y."/>
            <person name="Johnson-Hopson C."/>
            <person name="Hsuan V.W."/>
            <person name="Iida K."/>
            <person name="Karnes M."/>
            <person name="Khan S."/>
            <person name="Koesema E."/>
            <person name="Ishida J."/>
            <person name="Jiang P.X."/>
            <person name="Jones T."/>
            <person name="Kawai J."/>
            <person name="Kamiya A."/>
            <person name="Meyers C."/>
            <person name="Nakajima M."/>
            <person name="Narusaka M."/>
            <person name="Seki M."/>
            <person name="Sakurai T."/>
            <person name="Satou M."/>
            <person name="Tamse R."/>
            <person name="Vaysberg M."/>
            <person name="Wallender E.K."/>
            <person name="Wong C."/>
            <person name="Yamamura Y."/>
            <person name="Yuan S."/>
            <person name="Shinozaki K."/>
            <person name="Davis R.W."/>
            <person name="Theologis A."/>
            <person name="Ecker J.R."/>
        </authorList>
    </citation>
    <scope>NUCLEOTIDE SEQUENCE [LARGE SCALE MRNA]</scope>
    <source>
        <strain>cv. Columbia</strain>
    </source>
</reference>
<reference key="4">
    <citation type="journal article" date="2009" name="DNA Res.">
        <title>Analysis of multiple occurrences of alternative splicing events in Arabidopsis thaliana using novel sequenced full-length cDNAs.</title>
        <authorList>
            <person name="Iida K."/>
            <person name="Fukami-Kobayashi K."/>
            <person name="Toyoda A."/>
            <person name="Sakaki Y."/>
            <person name="Kobayashi M."/>
            <person name="Seki M."/>
            <person name="Shinozaki K."/>
        </authorList>
    </citation>
    <scope>NUCLEOTIDE SEQUENCE [LARGE SCALE MRNA]</scope>
    <source>
        <strain>cv. Columbia</strain>
    </source>
</reference>
<reference key="5">
    <citation type="journal article" date="2008" name="BMC Genomics">
        <title>Genome-wide and expression analysis of protein phosphatase 2C in rice and Arabidopsis.</title>
        <authorList>
            <person name="Xue T."/>
            <person name="Wang D."/>
            <person name="Zhang S."/>
            <person name="Ehlting J."/>
            <person name="Ni F."/>
            <person name="Jacab S."/>
            <person name="Zheng C."/>
            <person name="Zhong Y."/>
        </authorList>
    </citation>
    <scope>GENE FAMILY</scope>
    <scope>NOMENCLATURE</scope>
</reference>
<evidence type="ECO:0000250" key="1"/>
<evidence type="ECO:0000255" key="2">
    <source>
        <dbReference type="PROSITE-ProRule" id="PRU01082"/>
    </source>
</evidence>
<evidence type="ECO:0000305" key="3"/>
<proteinExistence type="evidence at transcript level"/>
<accession>Q8L7I4</accession>
<accession>Q94AE3</accession>
<accession>Q9C9R2</accession>
<name>P2C17_ARATH</name>